<gene>
    <name evidence="1" type="primary">smpB</name>
    <name type="ordered locus">BCI_0568</name>
</gene>
<sequence length="161" mass="18858">MKNQTPCRVSKITTITQNKRVRYEYFIEQEFEAGISLLGWEVKSLRAGIVHINDSYILLKDSEAFLLGATLRPLIVASSHILYSPMRSRKLLLRRRELDTLLGKVHRKGYTIVPISLYWRNSLAKIQLGIAKGKKQYDKRHCIKEREWLLNKARITKLVHR</sequence>
<proteinExistence type="inferred from homology"/>
<keyword id="KW-0963">Cytoplasm</keyword>
<keyword id="KW-1185">Reference proteome</keyword>
<keyword id="KW-0694">RNA-binding</keyword>
<comment type="function">
    <text evidence="1">Required for rescue of stalled ribosomes mediated by trans-translation. Binds to transfer-messenger RNA (tmRNA), required for stable association of tmRNA with ribosomes. tmRNA and SmpB together mimic tRNA shape, replacing the anticodon stem-loop with SmpB. tmRNA is encoded by the ssrA gene; the 2 termini fold to resemble tRNA(Ala) and it encodes a 'tag peptide', a short internal open reading frame. During trans-translation Ala-aminoacylated tmRNA acts like a tRNA, entering the A-site of stalled ribosomes, displacing the stalled mRNA. The ribosome then switches to translate the ORF on the tmRNA; the nascent peptide is terminated with the 'tag peptide' encoded by the tmRNA and targeted for degradation. The ribosome is freed to recommence translation, which seems to be the essential function of trans-translation.</text>
</comment>
<comment type="subcellular location">
    <subcellularLocation>
        <location evidence="1">Cytoplasm</location>
    </subcellularLocation>
    <text evidence="1">The tmRNA-SmpB complex associates with stalled 70S ribosomes.</text>
</comment>
<comment type="similarity">
    <text evidence="1">Belongs to the SmpB family.</text>
</comment>
<dbReference type="EMBL" id="CP000238">
    <property type="protein sequence ID" value="ABF13784.1"/>
    <property type="molecule type" value="Genomic_DNA"/>
</dbReference>
<dbReference type="RefSeq" id="WP_011520730.1">
    <property type="nucleotide sequence ID" value="NC_007984.1"/>
</dbReference>
<dbReference type="SMR" id="Q1LSR7"/>
<dbReference type="STRING" id="374463.BCI_0568"/>
<dbReference type="KEGG" id="bci:BCI_0568"/>
<dbReference type="HOGENOM" id="CLU_108953_3_0_6"/>
<dbReference type="OrthoDB" id="9805462at2"/>
<dbReference type="Proteomes" id="UP000002427">
    <property type="component" value="Chromosome"/>
</dbReference>
<dbReference type="GO" id="GO:0005829">
    <property type="term" value="C:cytosol"/>
    <property type="evidence" value="ECO:0007669"/>
    <property type="project" value="TreeGrafter"/>
</dbReference>
<dbReference type="GO" id="GO:0003723">
    <property type="term" value="F:RNA binding"/>
    <property type="evidence" value="ECO:0007669"/>
    <property type="project" value="UniProtKB-UniRule"/>
</dbReference>
<dbReference type="GO" id="GO:0070929">
    <property type="term" value="P:trans-translation"/>
    <property type="evidence" value="ECO:0007669"/>
    <property type="project" value="UniProtKB-UniRule"/>
</dbReference>
<dbReference type="CDD" id="cd09294">
    <property type="entry name" value="SmpB"/>
    <property type="match status" value="1"/>
</dbReference>
<dbReference type="Gene3D" id="2.40.280.10">
    <property type="match status" value="1"/>
</dbReference>
<dbReference type="HAMAP" id="MF_00023">
    <property type="entry name" value="SmpB"/>
    <property type="match status" value="1"/>
</dbReference>
<dbReference type="InterPro" id="IPR023620">
    <property type="entry name" value="SmpB"/>
</dbReference>
<dbReference type="InterPro" id="IPR000037">
    <property type="entry name" value="SsrA-bd_prot"/>
</dbReference>
<dbReference type="InterPro" id="IPR020081">
    <property type="entry name" value="SsrA-bd_prot_CS"/>
</dbReference>
<dbReference type="NCBIfam" id="NF003843">
    <property type="entry name" value="PRK05422.1"/>
    <property type="match status" value="1"/>
</dbReference>
<dbReference type="NCBIfam" id="TIGR00086">
    <property type="entry name" value="smpB"/>
    <property type="match status" value="1"/>
</dbReference>
<dbReference type="PANTHER" id="PTHR30308:SF2">
    <property type="entry name" value="SSRA-BINDING PROTEIN"/>
    <property type="match status" value="1"/>
</dbReference>
<dbReference type="PANTHER" id="PTHR30308">
    <property type="entry name" value="TMRNA-BINDING COMPONENT OF TRANS-TRANSLATION TAGGING COMPLEX"/>
    <property type="match status" value="1"/>
</dbReference>
<dbReference type="Pfam" id="PF01668">
    <property type="entry name" value="SmpB"/>
    <property type="match status" value="1"/>
</dbReference>
<dbReference type="SUPFAM" id="SSF74982">
    <property type="entry name" value="Small protein B (SmpB)"/>
    <property type="match status" value="1"/>
</dbReference>
<dbReference type="PROSITE" id="PS01317">
    <property type="entry name" value="SSRP"/>
    <property type="match status" value="1"/>
</dbReference>
<accession>Q1LSR7</accession>
<protein>
    <recommendedName>
        <fullName evidence="1">SsrA-binding protein</fullName>
    </recommendedName>
    <alternativeName>
        <fullName evidence="1">Small protein B</fullName>
    </alternativeName>
</protein>
<organism>
    <name type="scientific">Baumannia cicadellinicola subsp. Homalodisca coagulata</name>
    <dbReference type="NCBI Taxonomy" id="374463"/>
    <lineage>
        <taxon>Bacteria</taxon>
        <taxon>Pseudomonadati</taxon>
        <taxon>Pseudomonadota</taxon>
        <taxon>Gammaproteobacteria</taxon>
        <taxon>Candidatus Palibaumannia</taxon>
    </lineage>
</organism>
<evidence type="ECO:0000255" key="1">
    <source>
        <dbReference type="HAMAP-Rule" id="MF_00023"/>
    </source>
</evidence>
<reference key="1">
    <citation type="journal article" date="2006" name="PLoS Biol.">
        <title>Metabolic complementarity and genomics of the dual bacterial symbiosis of sharpshooters.</title>
        <authorList>
            <person name="Wu D."/>
            <person name="Daugherty S.C."/>
            <person name="Van Aken S.E."/>
            <person name="Pai G.H."/>
            <person name="Watkins K.L."/>
            <person name="Khouri H."/>
            <person name="Tallon L.J."/>
            <person name="Zaborsky J.M."/>
            <person name="Dunbar H.E."/>
            <person name="Tran P.L."/>
            <person name="Moran N.A."/>
            <person name="Eisen J.A."/>
        </authorList>
    </citation>
    <scope>NUCLEOTIDE SEQUENCE [LARGE SCALE GENOMIC DNA]</scope>
</reference>
<feature type="chain" id="PRO_0000331025" description="SsrA-binding protein">
    <location>
        <begin position="1"/>
        <end position="161"/>
    </location>
</feature>
<name>SSRP_BAUCH</name>